<keyword id="KW-0067">ATP-binding</keyword>
<keyword id="KW-0963">Cytoplasm</keyword>
<keyword id="KW-0275">Fatty acid biosynthesis</keyword>
<keyword id="KW-0276">Fatty acid metabolism</keyword>
<keyword id="KW-0444">Lipid biosynthesis</keyword>
<keyword id="KW-0443">Lipid metabolism</keyword>
<keyword id="KW-0479">Metal-binding</keyword>
<keyword id="KW-0547">Nucleotide-binding</keyword>
<keyword id="KW-0808">Transferase</keyword>
<keyword id="KW-0862">Zinc</keyword>
<keyword id="KW-0863">Zinc-finger</keyword>
<evidence type="ECO:0000255" key="1">
    <source>
        <dbReference type="HAMAP-Rule" id="MF_01395"/>
    </source>
</evidence>
<evidence type="ECO:0000255" key="2">
    <source>
        <dbReference type="PROSITE-ProRule" id="PRU01136"/>
    </source>
</evidence>
<gene>
    <name evidence="1" type="primary">accD</name>
    <name type="ordered locus">LBUL_0826</name>
</gene>
<sequence>MRLFKKRNTISERHVKANKRAEDLVPSGLMQRCPNCGLEFFARRLDKYKTCPDCDYGFRLTARERLAWLCEESEEWFKDIQPSDPLHFPNYEAKVAAGKKKTGLNEAVWTGLAKIGGQETALAIMDPFFIMGSLGQMTGEKLTRLIEAATEKRLPVVVFTASGGARMQEGIYSLMQMAKVVNAINRHKAAGLLYLVVLTDPTTGGVTASFASEGDITLAEAHAMVAFAGRRVIEQTIHEQLPKDAQRAETVLKHGFIDRIVLRQEEKETLAWLLKYGGMQDD</sequence>
<proteinExistence type="inferred from homology"/>
<comment type="function">
    <text evidence="1">Component of the acetyl coenzyme A carboxylase (ACC) complex. Biotin carboxylase (BC) catalyzes the carboxylation of biotin on its carrier protein (BCCP) and then the CO(2) group is transferred by the transcarboxylase to acetyl-CoA to form malonyl-CoA.</text>
</comment>
<comment type="catalytic activity">
    <reaction evidence="1">
        <text>N(6)-carboxybiotinyl-L-lysyl-[protein] + acetyl-CoA = N(6)-biotinyl-L-lysyl-[protein] + malonyl-CoA</text>
        <dbReference type="Rhea" id="RHEA:54728"/>
        <dbReference type="Rhea" id="RHEA-COMP:10505"/>
        <dbReference type="Rhea" id="RHEA-COMP:10506"/>
        <dbReference type="ChEBI" id="CHEBI:57288"/>
        <dbReference type="ChEBI" id="CHEBI:57384"/>
        <dbReference type="ChEBI" id="CHEBI:83144"/>
        <dbReference type="ChEBI" id="CHEBI:83145"/>
        <dbReference type="EC" id="2.1.3.15"/>
    </reaction>
</comment>
<comment type="cofactor">
    <cofactor evidence="1">
        <name>Zn(2+)</name>
        <dbReference type="ChEBI" id="CHEBI:29105"/>
    </cofactor>
    <text evidence="1">Binds 1 zinc ion per subunit.</text>
</comment>
<comment type="pathway">
    <text evidence="1">Lipid metabolism; malonyl-CoA biosynthesis; malonyl-CoA from acetyl-CoA: step 1/1.</text>
</comment>
<comment type="subunit">
    <text evidence="1">Acetyl-CoA carboxylase is a heterohexamer composed of biotin carboxyl carrier protein (AccB), biotin carboxylase (AccC) and two subunits each of ACCase subunit alpha (AccA) and ACCase subunit beta (AccD).</text>
</comment>
<comment type="subcellular location">
    <subcellularLocation>
        <location evidence="1">Cytoplasm</location>
    </subcellularLocation>
</comment>
<comment type="similarity">
    <text evidence="1">Belongs to the AccD/PCCB family.</text>
</comment>
<protein>
    <recommendedName>
        <fullName evidence="1">Acetyl-coenzyme A carboxylase carboxyl transferase subunit beta</fullName>
        <shortName evidence="1">ACCase subunit beta</shortName>
        <shortName evidence="1">Acetyl-CoA carboxylase carboxyltransferase subunit beta</shortName>
        <ecNumber evidence="1">2.1.3.15</ecNumber>
    </recommendedName>
</protein>
<organism>
    <name type="scientific">Lactobacillus delbrueckii subsp. bulgaricus (strain ATCC BAA-365 / Lb-18)</name>
    <dbReference type="NCBI Taxonomy" id="321956"/>
    <lineage>
        <taxon>Bacteria</taxon>
        <taxon>Bacillati</taxon>
        <taxon>Bacillota</taxon>
        <taxon>Bacilli</taxon>
        <taxon>Lactobacillales</taxon>
        <taxon>Lactobacillaceae</taxon>
        <taxon>Lactobacillus</taxon>
    </lineage>
</organism>
<name>ACCD_LACDB</name>
<dbReference type="EC" id="2.1.3.15" evidence="1"/>
<dbReference type="EMBL" id="CP000412">
    <property type="protein sequence ID" value="ABJ58432.1"/>
    <property type="molecule type" value="Genomic_DNA"/>
</dbReference>
<dbReference type="RefSeq" id="WP_003619936.1">
    <property type="nucleotide sequence ID" value="NC_008529.1"/>
</dbReference>
<dbReference type="SMR" id="Q04AU0"/>
<dbReference type="KEGG" id="lbu:LBUL_0826"/>
<dbReference type="HOGENOM" id="CLU_015486_1_1_9"/>
<dbReference type="BioCyc" id="LDEL321956:LBUL_RS03930-MONOMER"/>
<dbReference type="UniPathway" id="UPA00655">
    <property type="reaction ID" value="UER00711"/>
</dbReference>
<dbReference type="GO" id="GO:0009317">
    <property type="term" value="C:acetyl-CoA carboxylase complex"/>
    <property type="evidence" value="ECO:0007669"/>
    <property type="project" value="InterPro"/>
</dbReference>
<dbReference type="GO" id="GO:0003989">
    <property type="term" value="F:acetyl-CoA carboxylase activity"/>
    <property type="evidence" value="ECO:0007669"/>
    <property type="project" value="InterPro"/>
</dbReference>
<dbReference type="GO" id="GO:0005524">
    <property type="term" value="F:ATP binding"/>
    <property type="evidence" value="ECO:0007669"/>
    <property type="project" value="UniProtKB-KW"/>
</dbReference>
<dbReference type="GO" id="GO:0016743">
    <property type="term" value="F:carboxyl- or carbamoyltransferase activity"/>
    <property type="evidence" value="ECO:0007669"/>
    <property type="project" value="UniProtKB-UniRule"/>
</dbReference>
<dbReference type="GO" id="GO:0008270">
    <property type="term" value="F:zinc ion binding"/>
    <property type="evidence" value="ECO:0007669"/>
    <property type="project" value="UniProtKB-UniRule"/>
</dbReference>
<dbReference type="GO" id="GO:0006633">
    <property type="term" value="P:fatty acid biosynthetic process"/>
    <property type="evidence" value="ECO:0007669"/>
    <property type="project" value="UniProtKB-KW"/>
</dbReference>
<dbReference type="GO" id="GO:2001295">
    <property type="term" value="P:malonyl-CoA biosynthetic process"/>
    <property type="evidence" value="ECO:0007669"/>
    <property type="project" value="UniProtKB-UniRule"/>
</dbReference>
<dbReference type="Gene3D" id="3.90.226.10">
    <property type="entry name" value="2-enoyl-CoA Hydratase, Chain A, domain 1"/>
    <property type="match status" value="1"/>
</dbReference>
<dbReference type="HAMAP" id="MF_01395">
    <property type="entry name" value="AcetylCoA_CT_beta"/>
    <property type="match status" value="1"/>
</dbReference>
<dbReference type="InterPro" id="IPR034733">
    <property type="entry name" value="AcCoA_carboxyl_beta"/>
</dbReference>
<dbReference type="InterPro" id="IPR000438">
    <property type="entry name" value="Acetyl_CoA_COase_Trfase_b_su"/>
</dbReference>
<dbReference type="InterPro" id="IPR029045">
    <property type="entry name" value="ClpP/crotonase-like_dom_sf"/>
</dbReference>
<dbReference type="InterPro" id="IPR011762">
    <property type="entry name" value="COA_CT_N"/>
</dbReference>
<dbReference type="PANTHER" id="PTHR42995">
    <property type="entry name" value="ACETYL-COENZYME A CARBOXYLASE CARBOXYL TRANSFERASE SUBUNIT BETA, CHLOROPLASTIC"/>
    <property type="match status" value="1"/>
</dbReference>
<dbReference type="PANTHER" id="PTHR42995:SF5">
    <property type="entry name" value="ACETYL-COENZYME A CARBOXYLASE CARBOXYL TRANSFERASE SUBUNIT BETA, CHLOROPLASTIC"/>
    <property type="match status" value="1"/>
</dbReference>
<dbReference type="Pfam" id="PF01039">
    <property type="entry name" value="Carboxyl_trans"/>
    <property type="match status" value="1"/>
</dbReference>
<dbReference type="PRINTS" id="PR01070">
    <property type="entry name" value="ACCCTRFRASEB"/>
</dbReference>
<dbReference type="SUPFAM" id="SSF52096">
    <property type="entry name" value="ClpP/crotonase"/>
    <property type="match status" value="1"/>
</dbReference>
<dbReference type="PROSITE" id="PS50980">
    <property type="entry name" value="COA_CT_NTER"/>
    <property type="match status" value="1"/>
</dbReference>
<accession>Q04AU0</accession>
<feature type="chain" id="PRO_0000389764" description="Acetyl-coenzyme A carboxylase carboxyl transferase subunit beta">
    <location>
        <begin position="1"/>
        <end position="282"/>
    </location>
</feature>
<feature type="domain" description="CoA carboxyltransferase N-terminal" evidence="2">
    <location>
        <begin position="29"/>
        <end position="282"/>
    </location>
</feature>
<feature type="zinc finger region" description="C4-type" evidence="1">
    <location>
        <begin position="33"/>
        <end position="54"/>
    </location>
</feature>
<feature type="binding site" evidence="1">
    <location>
        <position position="33"/>
    </location>
    <ligand>
        <name>Zn(2+)</name>
        <dbReference type="ChEBI" id="CHEBI:29105"/>
    </ligand>
</feature>
<feature type="binding site" evidence="1">
    <location>
        <position position="36"/>
    </location>
    <ligand>
        <name>Zn(2+)</name>
        <dbReference type="ChEBI" id="CHEBI:29105"/>
    </ligand>
</feature>
<feature type="binding site" evidence="1">
    <location>
        <position position="51"/>
    </location>
    <ligand>
        <name>Zn(2+)</name>
        <dbReference type="ChEBI" id="CHEBI:29105"/>
    </ligand>
</feature>
<feature type="binding site" evidence="1">
    <location>
        <position position="54"/>
    </location>
    <ligand>
        <name>Zn(2+)</name>
        <dbReference type="ChEBI" id="CHEBI:29105"/>
    </ligand>
</feature>
<reference key="1">
    <citation type="journal article" date="2006" name="Proc. Natl. Acad. Sci. U.S.A.">
        <title>Comparative genomics of the lactic acid bacteria.</title>
        <authorList>
            <person name="Makarova K.S."/>
            <person name="Slesarev A."/>
            <person name="Wolf Y.I."/>
            <person name="Sorokin A."/>
            <person name="Mirkin B."/>
            <person name="Koonin E.V."/>
            <person name="Pavlov A."/>
            <person name="Pavlova N."/>
            <person name="Karamychev V."/>
            <person name="Polouchine N."/>
            <person name="Shakhova V."/>
            <person name="Grigoriev I."/>
            <person name="Lou Y."/>
            <person name="Rohksar D."/>
            <person name="Lucas S."/>
            <person name="Huang K."/>
            <person name="Goodstein D.M."/>
            <person name="Hawkins T."/>
            <person name="Plengvidhya V."/>
            <person name="Welker D."/>
            <person name="Hughes J."/>
            <person name="Goh Y."/>
            <person name="Benson A."/>
            <person name="Baldwin K."/>
            <person name="Lee J.-H."/>
            <person name="Diaz-Muniz I."/>
            <person name="Dosti B."/>
            <person name="Smeianov V."/>
            <person name="Wechter W."/>
            <person name="Barabote R."/>
            <person name="Lorca G."/>
            <person name="Altermann E."/>
            <person name="Barrangou R."/>
            <person name="Ganesan B."/>
            <person name="Xie Y."/>
            <person name="Rawsthorne H."/>
            <person name="Tamir D."/>
            <person name="Parker C."/>
            <person name="Breidt F."/>
            <person name="Broadbent J.R."/>
            <person name="Hutkins R."/>
            <person name="O'Sullivan D."/>
            <person name="Steele J."/>
            <person name="Unlu G."/>
            <person name="Saier M.H. Jr."/>
            <person name="Klaenhammer T."/>
            <person name="Richardson P."/>
            <person name="Kozyavkin S."/>
            <person name="Weimer B.C."/>
            <person name="Mills D.A."/>
        </authorList>
    </citation>
    <scope>NUCLEOTIDE SEQUENCE [LARGE SCALE GENOMIC DNA]</scope>
    <source>
        <strain>ATCC BAA-365 / Lb-18</strain>
    </source>
</reference>